<evidence type="ECO:0000250" key="1">
    <source>
        <dbReference type="UniProtKB" id="P48836"/>
    </source>
</evidence>
<evidence type="ECO:0000305" key="2"/>
<reference key="1">
    <citation type="submission" date="1997-01" db="EMBL/GenBank/DDBJ databases">
        <authorList>
            <person name="Hunt I.E."/>
            <person name="Bowman B.J."/>
        </authorList>
    </citation>
    <scope>NUCLEOTIDE SEQUENCE [GENOMIC DNA]</scope>
</reference>
<reference key="2">
    <citation type="journal article" date="2003" name="Nucleic Acids Res.">
        <title>What's in the genome of a filamentous fungus? Analysis of the Neurospora genome sequence.</title>
        <authorList>
            <person name="Mannhaupt G."/>
            <person name="Montrone C."/>
            <person name="Haase D."/>
            <person name="Mewes H.-W."/>
            <person name="Aign V."/>
            <person name="Hoheisel J.D."/>
            <person name="Fartmann B."/>
            <person name="Nyakatura G."/>
            <person name="Kempken F."/>
            <person name="Maier J."/>
            <person name="Schulte U."/>
        </authorList>
    </citation>
    <scope>NUCLEOTIDE SEQUENCE [LARGE SCALE GENOMIC DNA]</scope>
    <source>
        <strain>ATCC 24698 / 74-OR23-1A / CBS 708.71 / DSM 1257 / FGSC 987</strain>
    </source>
</reference>
<reference key="3">
    <citation type="journal article" date="2003" name="Nature">
        <title>The genome sequence of the filamentous fungus Neurospora crassa.</title>
        <authorList>
            <person name="Galagan J.E."/>
            <person name="Calvo S.E."/>
            <person name="Borkovich K.A."/>
            <person name="Selker E.U."/>
            <person name="Read N.D."/>
            <person name="Jaffe D.B."/>
            <person name="FitzHugh W."/>
            <person name="Ma L.-J."/>
            <person name="Smirnov S."/>
            <person name="Purcell S."/>
            <person name="Rehman B."/>
            <person name="Elkins T."/>
            <person name="Engels R."/>
            <person name="Wang S."/>
            <person name="Nielsen C.B."/>
            <person name="Butler J."/>
            <person name="Endrizzi M."/>
            <person name="Qui D."/>
            <person name="Ianakiev P."/>
            <person name="Bell-Pedersen D."/>
            <person name="Nelson M.A."/>
            <person name="Werner-Washburne M."/>
            <person name="Selitrennikoff C.P."/>
            <person name="Kinsey J.A."/>
            <person name="Braun E.L."/>
            <person name="Zelter A."/>
            <person name="Schulte U."/>
            <person name="Kothe G.O."/>
            <person name="Jedd G."/>
            <person name="Mewes H.-W."/>
            <person name="Staben C."/>
            <person name="Marcotte E."/>
            <person name="Greenberg D."/>
            <person name="Roy A."/>
            <person name="Foley K."/>
            <person name="Naylor J."/>
            <person name="Stange-Thomann N."/>
            <person name="Barrett R."/>
            <person name="Gnerre S."/>
            <person name="Kamal M."/>
            <person name="Kamvysselis M."/>
            <person name="Mauceli E.W."/>
            <person name="Bielke C."/>
            <person name="Rudd S."/>
            <person name="Frishman D."/>
            <person name="Krystofova S."/>
            <person name="Rasmussen C."/>
            <person name="Metzenberg R.L."/>
            <person name="Perkins D.D."/>
            <person name="Kroken S."/>
            <person name="Cogoni C."/>
            <person name="Macino G."/>
            <person name="Catcheside D.E.A."/>
            <person name="Li W."/>
            <person name="Pratt R.J."/>
            <person name="Osmani S.A."/>
            <person name="DeSouza C.P.C."/>
            <person name="Glass N.L."/>
            <person name="Orbach M.J."/>
            <person name="Berglund J.A."/>
            <person name="Voelker R."/>
            <person name="Yarden O."/>
            <person name="Plamann M."/>
            <person name="Seiler S."/>
            <person name="Dunlap J.C."/>
            <person name="Radford A."/>
            <person name="Aramayo R."/>
            <person name="Natvig D.O."/>
            <person name="Alex L.A."/>
            <person name="Mannhaupt G."/>
            <person name="Ebbole D.J."/>
            <person name="Freitag M."/>
            <person name="Paulsen I."/>
            <person name="Sachs M.S."/>
            <person name="Lander E.S."/>
            <person name="Nusbaum C."/>
            <person name="Birren B.W."/>
        </authorList>
    </citation>
    <scope>NUCLEOTIDE SEQUENCE [LARGE SCALE GENOMIC DNA]</scope>
    <source>
        <strain>ATCC 24698 / 74-OR23-1A / CBS 708.71 / DSM 1257 / FGSC 987</strain>
    </source>
</reference>
<organism>
    <name type="scientific">Neurospora crassa (strain ATCC 24698 / 74-OR23-1A / CBS 708.71 / DSM 1257 / FGSC 987)</name>
    <dbReference type="NCBI Taxonomy" id="367110"/>
    <lineage>
        <taxon>Eukaryota</taxon>
        <taxon>Fungi</taxon>
        <taxon>Dikarya</taxon>
        <taxon>Ascomycota</taxon>
        <taxon>Pezizomycotina</taxon>
        <taxon>Sordariomycetes</taxon>
        <taxon>Sordariomycetidae</taxon>
        <taxon>Sordariales</taxon>
        <taxon>Sordariaceae</taxon>
        <taxon>Neurospora</taxon>
    </lineage>
</organism>
<gene>
    <name type="primary">vma-10</name>
    <name type="ORF">B23B10.300</name>
    <name type="ORF">NCU05118</name>
</gene>
<feature type="chain" id="PRO_0000192914" description="V-type proton ATPase subunit G">
    <location>
        <begin position="1"/>
        <end position="115"/>
    </location>
</feature>
<sequence length="115" mass="13048">MSAQKSAGIQLLLDAEREATKIVQKAREYRTKRVREARDEAKKEIEAYKAQKEAEFKKFEAEHTQGNQAAQEEANAEAEARIREIKEAGNKNREQVIKDLLHAVFTPSPEAMAAH</sequence>
<proteinExistence type="inferred from homology"/>
<keyword id="KW-0375">Hydrogen ion transport</keyword>
<keyword id="KW-0406">Ion transport</keyword>
<keyword id="KW-0472">Membrane</keyword>
<keyword id="KW-1185">Reference proteome</keyword>
<keyword id="KW-0813">Transport</keyword>
<keyword id="KW-0926">Vacuole</keyword>
<name>VATG_NEUCR</name>
<dbReference type="EMBL" id="U84904">
    <property type="protein sequence ID" value="AAB41886.1"/>
    <property type="molecule type" value="Genomic_DNA"/>
</dbReference>
<dbReference type="EMBL" id="BX284752">
    <property type="protein sequence ID" value="CAD70443.1"/>
    <property type="molecule type" value="Genomic_DNA"/>
</dbReference>
<dbReference type="EMBL" id="CM002241">
    <property type="protein sequence ID" value="EAA27868.1"/>
    <property type="molecule type" value="Genomic_DNA"/>
</dbReference>
<dbReference type="RefSeq" id="XP_957104.1">
    <property type="nucleotide sequence ID" value="XM_952011.3"/>
</dbReference>
<dbReference type="SMR" id="P78713"/>
<dbReference type="FunCoup" id="P78713">
    <property type="interactions" value="282"/>
</dbReference>
<dbReference type="STRING" id="367110.P78713"/>
<dbReference type="PaxDb" id="5141-EFNCRP00000001523"/>
<dbReference type="EnsemblFungi" id="EAA27868">
    <property type="protein sequence ID" value="EAA27868"/>
    <property type="gene ID" value="NCU05118"/>
</dbReference>
<dbReference type="GeneID" id="3873251"/>
<dbReference type="KEGG" id="ncr:NCU05118"/>
<dbReference type="VEuPathDB" id="FungiDB:NCU05118"/>
<dbReference type="HOGENOM" id="CLU_125101_0_0_1"/>
<dbReference type="InParanoid" id="P78713"/>
<dbReference type="OrthoDB" id="250802at2759"/>
<dbReference type="Proteomes" id="UP000001805">
    <property type="component" value="Chromosome 5, Linkage Group VI"/>
</dbReference>
<dbReference type="GO" id="GO:0000221">
    <property type="term" value="C:vacuolar proton-transporting V-type ATPase, V1 domain"/>
    <property type="evidence" value="ECO:0000250"/>
    <property type="project" value="UniProtKB"/>
</dbReference>
<dbReference type="GO" id="GO:0016887">
    <property type="term" value="F:ATP hydrolysis activity"/>
    <property type="evidence" value="ECO:0000318"/>
    <property type="project" value="GO_Central"/>
</dbReference>
<dbReference type="GO" id="GO:0046961">
    <property type="term" value="F:proton-transporting ATPase activity, rotational mechanism"/>
    <property type="evidence" value="ECO:0000318"/>
    <property type="project" value="GO_Central"/>
</dbReference>
<dbReference type="FunFam" id="1.20.5.2950:FF:000001">
    <property type="entry name" value="V-type proton ATPase subunit G"/>
    <property type="match status" value="1"/>
</dbReference>
<dbReference type="FunFam" id="1.20.5.620:FF:000004">
    <property type="entry name" value="V-type proton ATPase subunit G"/>
    <property type="match status" value="1"/>
</dbReference>
<dbReference type="Gene3D" id="1.20.5.2950">
    <property type="match status" value="1"/>
</dbReference>
<dbReference type="InterPro" id="IPR005124">
    <property type="entry name" value="V-ATPase_G"/>
</dbReference>
<dbReference type="NCBIfam" id="TIGR01147">
    <property type="entry name" value="V_ATP_synt_G"/>
    <property type="match status" value="1"/>
</dbReference>
<dbReference type="PANTHER" id="PTHR12713:SF11">
    <property type="entry name" value="V-TYPE PROTON ATPASE SUBUNIT G"/>
    <property type="match status" value="1"/>
</dbReference>
<dbReference type="PANTHER" id="PTHR12713">
    <property type="entry name" value="VACUOLAR ATP SYNTHASE SUBUNIT G"/>
    <property type="match status" value="1"/>
</dbReference>
<dbReference type="Pfam" id="PF03179">
    <property type="entry name" value="V-ATPase_G"/>
    <property type="match status" value="1"/>
</dbReference>
<protein>
    <recommendedName>
        <fullName>V-type proton ATPase subunit G</fullName>
        <shortName>V-ATPase subunit G</shortName>
    </recommendedName>
    <alternativeName>
        <fullName>V-ATPase 13 kDa subunit</fullName>
    </alternativeName>
    <alternativeName>
        <fullName>Vacuolar proton pump subunit G</fullName>
    </alternativeName>
</protein>
<accession>P78713</accession>
<accession>Q7RYF5</accession>
<comment type="function">
    <text evidence="1">Subunit of the V1 complex of vacuolar(H+)-ATPase (V-ATPase), a multisubunit enzyme composed of a peripheral complex (V1) that hydrolyzes ATP and a membrane integral complex (V0) that translocates protons (By similarity). V-ATPase is responsible for acidifying and maintaining the pH of intracellular compartments (By similarity).</text>
</comment>
<comment type="subunit">
    <text evidence="1">V-ATPase is a heteromultimeric enzyme composed of a peripheral catalytic V1 complex (components A to H) attached to an integral membrane V0 proton pore complex (components: a, c, c', c'', d, e, f and VOA1).</text>
</comment>
<comment type="subcellular location">
    <subcellularLocation>
        <location evidence="1">Vacuole membrane</location>
        <topology evidence="2">Peripheral membrane protein</topology>
        <orientation evidence="2">Cytoplasmic side</orientation>
    </subcellularLocation>
</comment>
<comment type="similarity">
    <text evidence="2">Belongs to the V-ATPase G subunit family.</text>
</comment>